<comment type="function">
    <text evidence="1">Required for rescue of stalled ribosomes mediated by trans-translation. Binds to transfer-messenger RNA (tmRNA), required for stable association of tmRNA with ribosomes. tmRNA and SmpB together mimic tRNA shape, replacing the anticodon stem-loop with SmpB. tmRNA is encoded by the ssrA gene; the 2 termini fold to resemble tRNA(Ala) and it encodes a 'tag peptide', a short internal open reading frame. During trans-translation Ala-aminoacylated tmRNA acts like a tRNA, entering the A-site of stalled ribosomes, displacing the stalled mRNA. The ribosome then switches to translate the ORF on the tmRNA; the nascent peptide is terminated with the 'tag peptide' encoded by the tmRNA and targeted for degradation. The ribosome is freed to recommence translation, which seems to be the essential function of trans-translation.</text>
</comment>
<comment type="subcellular location">
    <subcellularLocation>
        <location evidence="1">Cytoplasm</location>
    </subcellularLocation>
    <text evidence="1">The tmRNA-SmpB complex associates with stalled 70S ribosomes.</text>
</comment>
<comment type="similarity">
    <text evidence="1">Belongs to the SmpB family.</text>
</comment>
<feature type="chain" id="PRO_1000116869" description="SsrA-binding protein">
    <location>
        <begin position="1"/>
        <end position="153"/>
    </location>
</feature>
<proteinExistence type="inferred from homology"/>
<protein>
    <recommendedName>
        <fullName evidence="1">SsrA-binding protein</fullName>
    </recommendedName>
    <alternativeName>
        <fullName evidence="1">Small protein B</fullName>
    </alternativeName>
</protein>
<sequence length="153" mass="17837">MPKGTGKVLAQNRKASHDYIIEETIEAGIELKGTEIKSIRRGSANLRDSYARVYKGEVFVYNMHIAPYEEGNRFNHDPLRTRKLLLKRKQIDKLFGQTREQGYTLVPLKLYIKNGYCKMLIGVAKGKKDYDKRHALKAKEAKREMDRAMKERY</sequence>
<evidence type="ECO:0000255" key="1">
    <source>
        <dbReference type="HAMAP-Rule" id="MF_00023"/>
    </source>
</evidence>
<organism>
    <name type="scientific">Macrococcus caseolyticus (strain JCSC5402)</name>
    <name type="common">Macrococcoides caseolyticum</name>
    <dbReference type="NCBI Taxonomy" id="458233"/>
    <lineage>
        <taxon>Bacteria</taxon>
        <taxon>Bacillati</taxon>
        <taxon>Bacillota</taxon>
        <taxon>Bacilli</taxon>
        <taxon>Bacillales</taxon>
        <taxon>Staphylococcaceae</taxon>
        <taxon>Macrococcoides</taxon>
    </lineage>
</organism>
<accession>B9EAH5</accession>
<name>SSRP_MACCJ</name>
<gene>
    <name evidence="1" type="primary">smpB</name>
    <name type="ordered locus">MCCL_0529</name>
</gene>
<dbReference type="EMBL" id="AP009484">
    <property type="protein sequence ID" value="BAH17236.1"/>
    <property type="molecule type" value="Genomic_DNA"/>
</dbReference>
<dbReference type="RefSeq" id="WP_012656437.1">
    <property type="nucleotide sequence ID" value="NC_011999.1"/>
</dbReference>
<dbReference type="SMR" id="B9EAH5"/>
<dbReference type="STRING" id="458233.MCCL_0529"/>
<dbReference type="GeneID" id="61129670"/>
<dbReference type="KEGG" id="mcl:MCCL_0529"/>
<dbReference type="eggNOG" id="COG0691">
    <property type="taxonomic scope" value="Bacteria"/>
</dbReference>
<dbReference type="HOGENOM" id="CLU_108953_0_0_9"/>
<dbReference type="OrthoDB" id="9805462at2"/>
<dbReference type="Proteomes" id="UP000001383">
    <property type="component" value="Chromosome"/>
</dbReference>
<dbReference type="GO" id="GO:0005829">
    <property type="term" value="C:cytosol"/>
    <property type="evidence" value="ECO:0007669"/>
    <property type="project" value="TreeGrafter"/>
</dbReference>
<dbReference type="GO" id="GO:0003723">
    <property type="term" value="F:RNA binding"/>
    <property type="evidence" value="ECO:0007669"/>
    <property type="project" value="UniProtKB-UniRule"/>
</dbReference>
<dbReference type="GO" id="GO:0070929">
    <property type="term" value="P:trans-translation"/>
    <property type="evidence" value="ECO:0007669"/>
    <property type="project" value="UniProtKB-UniRule"/>
</dbReference>
<dbReference type="CDD" id="cd09294">
    <property type="entry name" value="SmpB"/>
    <property type="match status" value="1"/>
</dbReference>
<dbReference type="Gene3D" id="2.40.280.10">
    <property type="match status" value="1"/>
</dbReference>
<dbReference type="HAMAP" id="MF_00023">
    <property type="entry name" value="SmpB"/>
    <property type="match status" value="1"/>
</dbReference>
<dbReference type="InterPro" id="IPR023620">
    <property type="entry name" value="SmpB"/>
</dbReference>
<dbReference type="InterPro" id="IPR000037">
    <property type="entry name" value="SsrA-bd_prot"/>
</dbReference>
<dbReference type="InterPro" id="IPR020081">
    <property type="entry name" value="SsrA-bd_prot_CS"/>
</dbReference>
<dbReference type="NCBIfam" id="NF003843">
    <property type="entry name" value="PRK05422.1"/>
    <property type="match status" value="1"/>
</dbReference>
<dbReference type="NCBIfam" id="TIGR00086">
    <property type="entry name" value="smpB"/>
    <property type="match status" value="1"/>
</dbReference>
<dbReference type="PANTHER" id="PTHR30308:SF2">
    <property type="entry name" value="SSRA-BINDING PROTEIN"/>
    <property type="match status" value="1"/>
</dbReference>
<dbReference type="PANTHER" id="PTHR30308">
    <property type="entry name" value="TMRNA-BINDING COMPONENT OF TRANS-TRANSLATION TAGGING COMPLEX"/>
    <property type="match status" value="1"/>
</dbReference>
<dbReference type="Pfam" id="PF01668">
    <property type="entry name" value="SmpB"/>
    <property type="match status" value="1"/>
</dbReference>
<dbReference type="SUPFAM" id="SSF74982">
    <property type="entry name" value="Small protein B (SmpB)"/>
    <property type="match status" value="1"/>
</dbReference>
<dbReference type="PROSITE" id="PS01317">
    <property type="entry name" value="SSRP"/>
    <property type="match status" value="1"/>
</dbReference>
<keyword id="KW-0963">Cytoplasm</keyword>
<keyword id="KW-1185">Reference proteome</keyword>
<keyword id="KW-0694">RNA-binding</keyword>
<reference key="1">
    <citation type="journal article" date="2009" name="J. Bacteriol.">
        <title>Complete genome sequence of Macrococcus caseolyticus strain JCSCS5402, reflecting the ancestral genome of the human-pathogenic staphylococci.</title>
        <authorList>
            <person name="Baba T."/>
            <person name="Kuwahara-Arai K."/>
            <person name="Uchiyama I."/>
            <person name="Takeuchi F."/>
            <person name="Ito T."/>
            <person name="Hiramatsu K."/>
        </authorList>
    </citation>
    <scope>NUCLEOTIDE SEQUENCE [LARGE SCALE GENOMIC DNA]</scope>
    <source>
        <strain>JCSC5402</strain>
    </source>
</reference>